<organism evidence="6">
    <name type="scientific">Arabidopsis thaliana</name>
    <name type="common">Mouse-ear cress</name>
    <dbReference type="NCBI Taxonomy" id="3702"/>
    <lineage>
        <taxon>Eukaryota</taxon>
        <taxon>Viridiplantae</taxon>
        <taxon>Streptophyta</taxon>
        <taxon>Embryophyta</taxon>
        <taxon>Tracheophyta</taxon>
        <taxon>Spermatophyta</taxon>
        <taxon>Magnoliopsida</taxon>
        <taxon>eudicotyledons</taxon>
        <taxon>Gunneridae</taxon>
        <taxon>Pentapetalae</taxon>
        <taxon>rosids</taxon>
        <taxon>malvids</taxon>
        <taxon>Brassicales</taxon>
        <taxon>Brassicaceae</taxon>
        <taxon>Camelineae</taxon>
        <taxon>Arabidopsis</taxon>
    </lineage>
</organism>
<protein>
    <recommendedName>
        <fullName evidence="3">Protein DOG1-like 3</fullName>
    </recommendedName>
</protein>
<name>DOGL3_ARATH</name>
<comment type="disruption phenotype">
    <text evidence="2">No germination phenotype.</text>
</comment>
<comment type="sequence caution" evidence="4">
    <conflict type="erroneous gene model prediction">
        <sequence resource="EMBL-CDS" id="CAB37454"/>
    </conflict>
</comment>
<comment type="sequence caution" evidence="4">
    <conflict type="erroneous gene model prediction">
        <sequence resource="EMBL-CDS" id="CAB78871"/>
    </conflict>
</comment>
<accession>Q58FV0</accession>
<accession>Q9SN44</accession>
<sequence length="282" mass="31544">MATSSSSYGIEQLQKGCYYEWMSVQAKHIVDLKEALMSHRSKEDHKLEELVGKIVNDFQKYTEKRSELSRRSCSSYFAPSWNSPLENGLLWMGGCRPSSFIRVIYSLCGSQAETQLSQYLLKIDENVEVNHGGSMSDLNASQLAKINDLHIKVIEKEDKITKKSANLQENVADMPIAIAAYATDLMNGDVVVEDALDKYEEGMAVLMVEADKLRFETLRKIVDVVTPVQAAEFLLAGKRLHISLHEWGRVREEQRFGCVRTDAAAATGGAGTEKSKRSSLLM</sequence>
<proteinExistence type="evidence at transcript level"/>
<reference key="1">
    <citation type="journal article" date="1999" name="Nature">
        <title>Sequence and analysis of chromosome 4 of the plant Arabidopsis thaliana.</title>
        <authorList>
            <person name="Mayer K.F.X."/>
            <person name="Schueller C."/>
            <person name="Wambutt R."/>
            <person name="Murphy G."/>
            <person name="Volckaert G."/>
            <person name="Pohl T."/>
            <person name="Duesterhoeft A."/>
            <person name="Stiekema W."/>
            <person name="Entian K.-D."/>
            <person name="Terryn N."/>
            <person name="Harris B."/>
            <person name="Ansorge W."/>
            <person name="Brandt P."/>
            <person name="Grivell L.A."/>
            <person name="Rieger M."/>
            <person name="Weichselgartner M."/>
            <person name="de Simone V."/>
            <person name="Obermaier B."/>
            <person name="Mache R."/>
            <person name="Mueller M."/>
            <person name="Kreis M."/>
            <person name="Delseny M."/>
            <person name="Puigdomenech P."/>
            <person name="Watson M."/>
            <person name="Schmidtheini T."/>
            <person name="Reichert B."/>
            <person name="Portetelle D."/>
            <person name="Perez-Alonso M."/>
            <person name="Boutry M."/>
            <person name="Bancroft I."/>
            <person name="Vos P."/>
            <person name="Hoheisel J."/>
            <person name="Zimmermann W."/>
            <person name="Wedler H."/>
            <person name="Ridley P."/>
            <person name="Langham S.-A."/>
            <person name="McCullagh B."/>
            <person name="Bilham L."/>
            <person name="Robben J."/>
            <person name="van der Schueren J."/>
            <person name="Grymonprez B."/>
            <person name="Chuang Y.-J."/>
            <person name="Vandenbussche F."/>
            <person name="Braeken M."/>
            <person name="Weltjens I."/>
            <person name="Voet M."/>
            <person name="Bastiaens I."/>
            <person name="Aert R."/>
            <person name="Defoor E."/>
            <person name="Weitzenegger T."/>
            <person name="Bothe G."/>
            <person name="Ramsperger U."/>
            <person name="Hilbert H."/>
            <person name="Braun M."/>
            <person name="Holzer E."/>
            <person name="Brandt A."/>
            <person name="Peters S."/>
            <person name="van Staveren M."/>
            <person name="Dirkse W."/>
            <person name="Mooijman P."/>
            <person name="Klein Lankhorst R."/>
            <person name="Rose M."/>
            <person name="Hauf J."/>
            <person name="Koetter P."/>
            <person name="Berneiser S."/>
            <person name="Hempel S."/>
            <person name="Feldpausch M."/>
            <person name="Lamberth S."/>
            <person name="Van den Daele H."/>
            <person name="De Keyser A."/>
            <person name="Buysshaert C."/>
            <person name="Gielen J."/>
            <person name="Villarroel R."/>
            <person name="De Clercq R."/>
            <person name="van Montagu M."/>
            <person name="Rogers J."/>
            <person name="Cronin A."/>
            <person name="Quail M.A."/>
            <person name="Bray-Allen S."/>
            <person name="Clark L."/>
            <person name="Doggett J."/>
            <person name="Hall S."/>
            <person name="Kay M."/>
            <person name="Lennard N."/>
            <person name="McLay K."/>
            <person name="Mayes R."/>
            <person name="Pettett A."/>
            <person name="Rajandream M.A."/>
            <person name="Lyne M."/>
            <person name="Benes V."/>
            <person name="Rechmann S."/>
            <person name="Borkova D."/>
            <person name="Bloecker H."/>
            <person name="Scharfe M."/>
            <person name="Grimm M."/>
            <person name="Loehnert T.-H."/>
            <person name="Dose S."/>
            <person name="de Haan M."/>
            <person name="Maarse A.C."/>
            <person name="Schaefer M."/>
            <person name="Mueller-Auer S."/>
            <person name="Gabel C."/>
            <person name="Fuchs M."/>
            <person name="Fartmann B."/>
            <person name="Granderath K."/>
            <person name="Dauner D."/>
            <person name="Herzl A."/>
            <person name="Neumann S."/>
            <person name="Argiriou A."/>
            <person name="Vitale D."/>
            <person name="Liguori R."/>
            <person name="Piravandi E."/>
            <person name="Massenet O."/>
            <person name="Quigley F."/>
            <person name="Clabauld G."/>
            <person name="Muendlein A."/>
            <person name="Felber R."/>
            <person name="Schnabl S."/>
            <person name="Hiller R."/>
            <person name="Schmidt W."/>
            <person name="Lecharny A."/>
            <person name="Aubourg S."/>
            <person name="Chefdor F."/>
            <person name="Cooke R."/>
            <person name="Berger C."/>
            <person name="Monfort A."/>
            <person name="Casacuberta E."/>
            <person name="Gibbons T."/>
            <person name="Weber N."/>
            <person name="Vandenbol M."/>
            <person name="Bargues M."/>
            <person name="Terol J."/>
            <person name="Torres A."/>
            <person name="Perez-Perez A."/>
            <person name="Purnelle B."/>
            <person name="Bent E."/>
            <person name="Johnson S."/>
            <person name="Tacon D."/>
            <person name="Jesse T."/>
            <person name="Heijnen L."/>
            <person name="Schwarz S."/>
            <person name="Scholler P."/>
            <person name="Heber S."/>
            <person name="Francs P."/>
            <person name="Bielke C."/>
            <person name="Frishman D."/>
            <person name="Haase D."/>
            <person name="Lemcke K."/>
            <person name="Mewes H.-W."/>
            <person name="Stocker S."/>
            <person name="Zaccaria P."/>
            <person name="Bevan M."/>
            <person name="Wilson R.K."/>
            <person name="de la Bastide M."/>
            <person name="Habermann K."/>
            <person name="Parnell L."/>
            <person name="Dedhia N."/>
            <person name="Gnoj L."/>
            <person name="Schutz K."/>
            <person name="Huang E."/>
            <person name="Spiegel L."/>
            <person name="Sekhon M."/>
            <person name="Murray J."/>
            <person name="Sheet P."/>
            <person name="Cordes M."/>
            <person name="Abu-Threideh J."/>
            <person name="Stoneking T."/>
            <person name="Kalicki J."/>
            <person name="Graves T."/>
            <person name="Harmon G."/>
            <person name="Edwards J."/>
            <person name="Latreille P."/>
            <person name="Courtney L."/>
            <person name="Cloud J."/>
            <person name="Abbott A."/>
            <person name="Scott K."/>
            <person name="Johnson D."/>
            <person name="Minx P."/>
            <person name="Bentley D."/>
            <person name="Fulton B."/>
            <person name="Miller N."/>
            <person name="Greco T."/>
            <person name="Kemp K."/>
            <person name="Kramer J."/>
            <person name="Fulton L."/>
            <person name="Mardis E."/>
            <person name="Dante M."/>
            <person name="Pepin K."/>
            <person name="Hillier L.W."/>
            <person name="Nelson J."/>
            <person name="Spieth J."/>
            <person name="Ryan E."/>
            <person name="Andrews S."/>
            <person name="Geisel C."/>
            <person name="Layman D."/>
            <person name="Du H."/>
            <person name="Ali J."/>
            <person name="Berghoff A."/>
            <person name="Jones K."/>
            <person name="Drone K."/>
            <person name="Cotton M."/>
            <person name="Joshu C."/>
            <person name="Antonoiu B."/>
            <person name="Zidanic M."/>
            <person name="Strong C."/>
            <person name="Sun H."/>
            <person name="Lamar B."/>
            <person name="Yordan C."/>
            <person name="Ma P."/>
            <person name="Zhong J."/>
            <person name="Preston R."/>
            <person name="Vil D."/>
            <person name="Shekher M."/>
            <person name="Matero A."/>
            <person name="Shah R."/>
            <person name="Swaby I.K."/>
            <person name="O'Shaughnessy A."/>
            <person name="Rodriguez M."/>
            <person name="Hoffman J."/>
            <person name="Till S."/>
            <person name="Granat S."/>
            <person name="Shohdy N."/>
            <person name="Hasegawa A."/>
            <person name="Hameed A."/>
            <person name="Lodhi M."/>
            <person name="Johnson A."/>
            <person name="Chen E."/>
            <person name="Marra M.A."/>
            <person name="Martienssen R."/>
            <person name="McCombie W.R."/>
        </authorList>
    </citation>
    <scope>NUCLEOTIDE SEQUENCE [LARGE SCALE GENOMIC DNA]</scope>
    <source>
        <strain>cv. Columbia</strain>
    </source>
</reference>
<reference key="2">
    <citation type="journal article" date="2017" name="Plant J.">
        <title>Araport11: a complete reannotation of the Arabidopsis thaliana reference genome.</title>
        <authorList>
            <person name="Cheng C.Y."/>
            <person name="Krishnakumar V."/>
            <person name="Chan A.P."/>
            <person name="Thibaud-Nissen F."/>
            <person name="Schobel S."/>
            <person name="Town C.D."/>
        </authorList>
    </citation>
    <scope>GENOME REANNOTATION</scope>
    <source>
        <strain>cv. Columbia</strain>
    </source>
</reference>
<reference key="3">
    <citation type="submission" date="2005-03" db="EMBL/GenBank/DDBJ databases">
        <authorList>
            <person name="Underwood B.A."/>
            <person name="Xiao Y.-L."/>
            <person name="Moskal W.A. Jr."/>
            <person name="Monaghan E.L."/>
            <person name="Wang W."/>
            <person name="Redman J.C."/>
            <person name="Wu H.C."/>
            <person name="Utterback T."/>
            <person name="Town C.D."/>
        </authorList>
    </citation>
    <scope>NUCLEOTIDE SEQUENCE [LARGE SCALE GENOMIC DNA]</scope>
    <source>
        <strain>cv. Columbia</strain>
    </source>
</reference>
<reference key="4">
    <citation type="submission" date="2005-07" db="EMBL/GenBank/DDBJ databases">
        <title>Reconstruction of cDNA sequences for hypothetical genes in Arabidopsis thaliana from 5' and 3' RACE products.</title>
        <authorList>
            <person name="Xiao Y."/>
            <person name="Underwood B.A."/>
            <person name="Moskal W."/>
            <person name="Redman J."/>
            <person name="Wang W."/>
            <person name="Monaghan E."/>
            <person name="Wu H.C."/>
            <person name="Utterback T."/>
            <person name="Town C.D."/>
        </authorList>
    </citation>
    <scope>NUCLEOTIDE SEQUENCE [LARGE SCALE MRNA]</scope>
    <source>
        <strain>cv. Columbia</strain>
    </source>
</reference>
<reference key="5">
    <citation type="journal article" date="2006" name="Proc. Natl. Acad. Sci. U.S.A.">
        <title>Cloning of DOG1, a quantitative trait locus controlling seed dormancy in Arabidopsis.</title>
        <authorList>
            <person name="Bentsink L."/>
            <person name="Jowett J."/>
            <person name="Hanhart C.J."/>
            <person name="Koornneef M."/>
        </authorList>
    </citation>
    <scope>GENE FAMILY</scope>
    <scope>NOMENCLATURE</scope>
    <scope>DISRUPTION PHENOTYPE</scope>
</reference>
<evidence type="ECO:0000255" key="1">
    <source>
        <dbReference type="PROSITE-ProRule" id="PRU01147"/>
    </source>
</evidence>
<evidence type="ECO:0000269" key="2">
    <source>
    </source>
</evidence>
<evidence type="ECO:0000303" key="3">
    <source>
    </source>
</evidence>
<evidence type="ECO:0000305" key="4"/>
<evidence type="ECO:0000312" key="5">
    <source>
        <dbReference type="Araport" id="AT4G18690"/>
    </source>
</evidence>
<evidence type="ECO:0000312" key="6">
    <source>
        <dbReference type="EMBL" id="AAX55185.1"/>
    </source>
</evidence>
<evidence type="ECO:0000312" key="7">
    <source>
        <dbReference type="EMBL" id="CAB37454.1"/>
    </source>
</evidence>
<keyword id="KW-1185">Reference proteome</keyword>
<dbReference type="EMBL" id="AL035526">
    <property type="protein sequence ID" value="CAB37454.1"/>
    <property type="status" value="ALT_SEQ"/>
    <property type="molecule type" value="Genomic_DNA"/>
</dbReference>
<dbReference type="EMBL" id="AL161549">
    <property type="protein sequence ID" value="CAB78871.1"/>
    <property type="status" value="ALT_SEQ"/>
    <property type="molecule type" value="Genomic_DNA"/>
</dbReference>
<dbReference type="EMBL" id="CP002687">
    <property type="protein sequence ID" value="AEE84076.1"/>
    <property type="molecule type" value="Genomic_DNA"/>
</dbReference>
<dbReference type="EMBL" id="AY954859">
    <property type="protein sequence ID" value="AAX55185.1"/>
    <property type="molecule type" value="Genomic_DNA"/>
</dbReference>
<dbReference type="EMBL" id="DQ132707">
    <property type="protein sequence ID" value="AAZ52737.1"/>
    <property type="molecule type" value="mRNA"/>
</dbReference>
<dbReference type="PIR" id="T04861">
    <property type="entry name" value="T04861"/>
</dbReference>
<dbReference type="RefSeq" id="NP_193604.2">
    <property type="nucleotide sequence ID" value="NM_117985.2"/>
</dbReference>
<dbReference type="SMR" id="Q58FV0"/>
<dbReference type="STRING" id="3702.Q58FV0"/>
<dbReference type="iPTMnet" id="Q58FV0"/>
<dbReference type="PaxDb" id="3702-AT4G18690.1"/>
<dbReference type="DNASU" id="827603"/>
<dbReference type="EnsemblPlants" id="AT4G18690.1">
    <property type="protein sequence ID" value="AT4G18690.1"/>
    <property type="gene ID" value="AT4G18690"/>
</dbReference>
<dbReference type="GeneID" id="827603"/>
<dbReference type="Gramene" id="AT4G18690.1">
    <property type="protein sequence ID" value="AT4G18690.1"/>
    <property type="gene ID" value="AT4G18690"/>
</dbReference>
<dbReference type="KEGG" id="ath:AT4G18690"/>
<dbReference type="Araport" id="AT4G18690"/>
<dbReference type="TAIR" id="AT4G18690"/>
<dbReference type="eggNOG" id="ENOG502QW7X">
    <property type="taxonomic scope" value="Eukaryota"/>
</dbReference>
<dbReference type="HOGENOM" id="CLU_024782_2_2_1"/>
<dbReference type="InParanoid" id="Q58FV0"/>
<dbReference type="OMA" id="WGSTFEN"/>
<dbReference type="PRO" id="PR:Q58FV0"/>
<dbReference type="Proteomes" id="UP000006548">
    <property type="component" value="Chromosome 4"/>
</dbReference>
<dbReference type="ExpressionAtlas" id="Q58FV0">
    <property type="expression patterns" value="baseline and differential"/>
</dbReference>
<dbReference type="GO" id="GO:0043565">
    <property type="term" value="F:sequence-specific DNA binding"/>
    <property type="evidence" value="ECO:0007669"/>
    <property type="project" value="InterPro"/>
</dbReference>
<dbReference type="GO" id="GO:0006351">
    <property type="term" value="P:DNA-templated transcription"/>
    <property type="evidence" value="ECO:0007669"/>
    <property type="project" value="InterPro"/>
</dbReference>
<dbReference type="InterPro" id="IPR051886">
    <property type="entry name" value="Seed_Dev/Stress_Resp_Reg"/>
</dbReference>
<dbReference type="InterPro" id="IPR025422">
    <property type="entry name" value="TGA_domain"/>
</dbReference>
<dbReference type="PANTHER" id="PTHR46354">
    <property type="entry name" value="DOG1 DOMAIN-CONTAINING PROTEIN"/>
    <property type="match status" value="1"/>
</dbReference>
<dbReference type="PANTHER" id="PTHR46354:SF11">
    <property type="entry name" value="PROTEIN DOG1-LIKE 2-RELATED"/>
    <property type="match status" value="1"/>
</dbReference>
<dbReference type="Pfam" id="PF14144">
    <property type="entry name" value="DOG1"/>
    <property type="match status" value="1"/>
</dbReference>
<dbReference type="PROSITE" id="PS51806">
    <property type="entry name" value="DOG1"/>
    <property type="match status" value="1"/>
</dbReference>
<feature type="chain" id="PRO_0000437688" description="Protein DOG1-like 3">
    <location>
        <begin position="1"/>
        <end position="282"/>
    </location>
</feature>
<feature type="domain" description="DOG1" evidence="1">
    <location>
        <begin position="11"/>
        <end position="254"/>
    </location>
</feature>
<gene>
    <name evidence="3" type="primary">DOGL3</name>
    <name evidence="5" type="ordered locus">At4g18690</name>
    <name evidence="7" type="ORF">F28A21.100</name>
</gene>